<gene>
    <name evidence="3" type="ordered locus">AtMg01300</name>
</gene>
<gene>
    <name evidence="2" type="ordered locus">At2g07692</name>
</gene>
<dbReference type="EMBL" id="Y08501">
    <property type="protein sequence ID" value="CAA69814.1"/>
    <property type="molecule type" value="Genomic_DNA"/>
</dbReference>
<dbReference type="EMBL" id="BK010421">
    <property type="status" value="NOT_ANNOTATED_CDS"/>
    <property type="molecule type" value="Genomic_DNA"/>
</dbReference>
<dbReference type="EMBL" id="AC007729">
    <property type="protein sequence ID" value="AAM15493.1"/>
    <property type="molecule type" value="Genomic_DNA"/>
</dbReference>
<dbReference type="EMBL" id="CP002685">
    <property type="protein sequence ID" value="AEC06081.1"/>
    <property type="molecule type" value="Genomic_DNA"/>
</dbReference>
<dbReference type="EMBL" id="AY461623">
    <property type="status" value="NOT_ANNOTATED_CDS"/>
    <property type="molecule type" value="mRNA"/>
</dbReference>
<dbReference type="RefSeq" id="NP_085582.1">
    <property type="nucleotide sequence ID" value="NC_001284.2"/>
</dbReference>
<dbReference type="RefSeq" id="NP_178784.1">
    <property type="nucleotide sequence ID" value="NM_126743.2"/>
</dbReference>
<dbReference type="STRING" id="3702.P92561"/>
<dbReference type="PaxDb" id="3702-AT2G07692.1"/>
<dbReference type="EnsemblPlants" id="AT2G07692.1">
    <property type="protein sequence ID" value="AT2G07692.1"/>
    <property type="gene ID" value="AT2G07692"/>
</dbReference>
<dbReference type="EnsemblPlants" id="ATMG01300.1">
    <property type="protein sequence ID" value="ATMG01300.1"/>
    <property type="gene ID" value="ATMG01300"/>
</dbReference>
<dbReference type="GeneID" id="815368"/>
<dbReference type="Gramene" id="AT2G07692.1">
    <property type="protein sequence ID" value="AT2G07692.1"/>
    <property type="gene ID" value="AT2G07692"/>
</dbReference>
<dbReference type="Gramene" id="ATMG01300.1">
    <property type="protein sequence ID" value="ATMG01300.1"/>
    <property type="gene ID" value="ATMG01300"/>
</dbReference>
<dbReference type="KEGG" id="ath:AT2G07692"/>
<dbReference type="Araport" id="AT2G07692"/>
<dbReference type="Araport" id="ATMG01300"/>
<dbReference type="TAIR" id="AT2G07692"/>
<dbReference type="TAIR" id="ATMG01300">
    <property type="gene designation" value="ORF136A"/>
</dbReference>
<dbReference type="HOGENOM" id="CLU_1878252_0_0_1"/>
<dbReference type="InParanoid" id="P92561"/>
<dbReference type="OrthoDB" id="10270438at2759"/>
<dbReference type="PRO" id="PR:P92561"/>
<dbReference type="Proteomes" id="UP000006548">
    <property type="component" value="Chromosome 2"/>
</dbReference>
<dbReference type="Proteomes" id="UP000006548">
    <property type="component" value="Mitochondrion MT"/>
</dbReference>
<dbReference type="ExpressionAtlas" id="P92561">
    <property type="expression patterns" value="baseline"/>
</dbReference>
<dbReference type="GO" id="GO:0005739">
    <property type="term" value="C:mitochondrion"/>
    <property type="evidence" value="ECO:0007669"/>
    <property type="project" value="UniProtKB-SubCell"/>
</dbReference>
<comment type="subcellular location">
    <subcellularLocation>
        <location evidence="1">Mitochondrion</location>
    </subcellularLocation>
</comment>
<comment type="miscellaneous">
    <text>A stretch of 270 kb of the mitochondrial genome is duplicated within the centromere of chromosome 2 resulting in the duplication of the gene. The expression of this duplicated gene (At2g07692) is demonstrated.</text>
</comment>
<sequence length="136" mass="15237">MPRTELILNAAVILYTMIPPDAHSLGSEGRVVNGNWRDTSDVKEGSLPREVTKQVNGSLSSRTKQVNEFSKHTRFLVDISFSCCSLINRSLWESAQKDELSDSFGKALTTKPECLAVRETPRNFRRNLCLVIPSLN</sequence>
<keyword id="KW-0496">Mitochondrion</keyword>
<keyword id="KW-1185">Reference proteome</keyword>
<proteinExistence type="evidence at transcript level"/>
<name>M1300_ARATH</name>
<protein>
    <recommendedName>
        <fullName>Uncharacterized mitochondrial protein AtMg01300</fullName>
    </recommendedName>
    <alternativeName>
        <fullName>ORF136a</fullName>
    </alternativeName>
</protein>
<geneLocation type="mitochondrion"/>
<organism>
    <name type="scientific">Arabidopsis thaliana</name>
    <name type="common">Mouse-ear cress</name>
    <dbReference type="NCBI Taxonomy" id="3702"/>
    <lineage>
        <taxon>Eukaryota</taxon>
        <taxon>Viridiplantae</taxon>
        <taxon>Streptophyta</taxon>
        <taxon>Embryophyta</taxon>
        <taxon>Tracheophyta</taxon>
        <taxon>Spermatophyta</taxon>
        <taxon>Magnoliopsida</taxon>
        <taxon>eudicotyledons</taxon>
        <taxon>Gunneridae</taxon>
        <taxon>Pentapetalae</taxon>
        <taxon>rosids</taxon>
        <taxon>malvids</taxon>
        <taxon>Brassicales</taxon>
        <taxon>Brassicaceae</taxon>
        <taxon>Camelineae</taxon>
        <taxon>Arabidopsis</taxon>
    </lineage>
</organism>
<accession>P92561</accession>
<accession>Q1ZXV7</accession>
<accession>Q8S893</accession>
<evidence type="ECO:0000305" key="1"/>
<evidence type="ECO:0000312" key="2">
    <source>
        <dbReference type="Araport" id="AT2G07692"/>
    </source>
</evidence>
<evidence type="ECO:0000312" key="3">
    <source>
        <dbReference type="Araport" id="ATMG01300"/>
    </source>
</evidence>
<feature type="chain" id="PRO_0000196825" description="Uncharacterized mitochondrial protein AtMg01300">
    <location>
        <begin position="1"/>
        <end position="136"/>
    </location>
</feature>
<feature type="sequence conflict" description="In Ref. 5; AY461623." evidence="1" ref="5">
    <original>K</original>
    <variation>E</variation>
    <location>
        <position position="71"/>
    </location>
</feature>
<reference key="1">
    <citation type="journal article" date="1997" name="Nat. Genet.">
        <title>The mitochondrial genome of Arabidopsis thaliana contains 57 genes in 366,924 nucleotides.</title>
        <authorList>
            <person name="Unseld M."/>
            <person name="Marienfeld J.R."/>
            <person name="Brandt P."/>
            <person name="Brennicke A."/>
        </authorList>
    </citation>
    <scope>NUCLEOTIDE SEQUENCE [LARGE SCALE GENOMIC DNA]</scope>
    <source>
        <strain>cv. C24</strain>
    </source>
</reference>
<reference key="2">
    <citation type="journal article" date="2018" name="Plant Cell">
        <title>Correction of persistent errors in Arabidopsis reference mitochondrial genomes.</title>
        <authorList>
            <person name="Sloan D.B."/>
            <person name="Wu Z."/>
            <person name="Sharbrough J."/>
        </authorList>
    </citation>
    <scope>NUCLEOTIDE SEQUENCE [LARGE SCALE GENOMIC DNA]</scope>
    <source>
        <strain>cv. Columbia</strain>
    </source>
</reference>
<reference key="3">
    <citation type="journal article" date="1999" name="Nature">
        <title>Sequence and analysis of chromosome 2 of the plant Arabidopsis thaliana.</title>
        <authorList>
            <person name="Lin X."/>
            <person name="Kaul S."/>
            <person name="Rounsley S.D."/>
            <person name="Shea T.P."/>
            <person name="Benito M.-I."/>
            <person name="Town C.D."/>
            <person name="Fujii C.Y."/>
            <person name="Mason T.M."/>
            <person name="Bowman C.L."/>
            <person name="Barnstead M.E."/>
            <person name="Feldblyum T.V."/>
            <person name="Buell C.R."/>
            <person name="Ketchum K.A."/>
            <person name="Lee J.J."/>
            <person name="Ronning C.M."/>
            <person name="Koo H.L."/>
            <person name="Moffat K.S."/>
            <person name="Cronin L.A."/>
            <person name="Shen M."/>
            <person name="Pai G."/>
            <person name="Van Aken S."/>
            <person name="Umayam L."/>
            <person name="Tallon L.J."/>
            <person name="Gill J.E."/>
            <person name="Adams M.D."/>
            <person name="Carrera A.J."/>
            <person name="Creasy T.H."/>
            <person name="Goodman H.M."/>
            <person name="Somerville C.R."/>
            <person name="Copenhaver G.P."/>
            <person name="Preuss D."/>
            <person name="Nierman W.C."/>
            <person name="White O."/>
            <person name="Eisen J.A."/>
            <person name="Salzberg S.L."/>
            <person name="Fraser C.M."/>
            <person name="Venter J.C."/>
        </authorList>
    </citation>
    <scope>NUCLEOTIDE SEQUENCE [LARGE SCALE GENOMIC DNA] (AT2G07692)</scope>
    <source>
        <strain>cv. Columbia</strain>
    </source>
</reference>
<reference key="4">
    <citation type="journal article" date="2017" name="Plant J.">
        <title>Araport11: a complete reannotation of the Arabidopsis thaliana reference genome.</title>
        <authorList>
            <person name="Cheng C.Y."/>
            <person name="Krishnakumar V."/>
            <person name="Chan A.P."/>
            <person name="Thibaud-Nissen F."/>
            <person name="Schobel S."/>
            <person name="Town C.D."/>
        </authorList>
    </citation>
    <scope>GENOME REANNOTATION (AT2G07692)</scope>
    <source>
        <strain>cv. Columbia</strain>
    </source>
</reference>
<reference key="5">
    <citation type="journal article" date="2005" name="Plant Physiol.">
        <title>Analysis of the cDNAs of hypothetical genes on Arabidopsis chromosome 2 reveals numerous transcript variants.</title>
        <authorList>
            <person name="Xiao Y.-L."/>
            <person name="Smith S.R."/>
            <person name="Ishmael N."/>
            <person name="Redman J.C."/>
            <person name="Kumar N."/>
            <person name="Monaghan E.L."/>
            <person name="Ayele M."/>
            <person name="Haas B.J."/>
            <person name="Wu H.C."/>
            <person name="Town C.D."/>
        </authorList>
    </citation>
    <scope>NUCLEOTIDE SEQUENCE [LARGE SCALE MRNA] OF 1-100 (AT2G07692)</scope>
    <source>
        <strain>cv. Columbia</strain>
    </source>
</reference>